<gene>
    <name evidence="17" type="primary">H6PD</name>
    <name type="synonym">GDH</name>
</gene>
<dbReference type="EC" id="1.1.1.47" evidence="4"/>
<dbReference type="EC" id="1.1.1.363" evidence="10"/>
<dbReference type="EC" id="3.1.1.31" evidence="4"/>
<dbReference type="EMBL" id="AJ012590">
    <property type="protein sequence ID" value="CAA10071.1"/>
    <property type="molecule type" value="mRNA"/>
</dbReference>
<dbReference type="EMBL" id="CR749282">
    <property type="protein sequence ID" value="CAH18137.1"/>
    <property type="molecule type" value="mRNA"/>
</dbReference>
<dbReference type="EMBL" id="Z98044">
    <property type="status" value="NOT_ANNOTATED_CDS"/>
    <property type="molecule type" value="Genomic_DNA"/>
</dbReference>
<dbReference type="EMBL" id="BC081559">
    <property type="protein sequence ID" value="AAH81559.1"/>
    <property type="molecule type" value="mRNA"/>
</dbReference>
<dbReference type="CCDS" id="CCDS101.1">
    <molecule id="O95479-1"/>
</dbReference>
<dbReference type="CCDS" id="CCDS72697.1">
    <molecule id="O95479-2"/>
</dbReference>
<dbReference type="RefSeq" id="NP_001269516.1">
    <molecule id="O95479-2"/>
    <property type="nucleotide sequence ID" value="NM_001282587.2"/>
</dbReference>
<dbReference type="RefSeq" id="NP_004276.2">
    <molecule id="O95479-1"/>
    <property type="nucleotide sequence ID" value="NM_004285.3"/>
</dbReference>
<dbReference type="RefSeq" id="XP_006711115.1">
    <molecule id="O95479-1"/>
    <property type="nucleotide sequence ID" value="XM_006711052.5"/>
</dbReference>
<dbReference type="RefSeq" id="XP_016858354.1">
    <molecule id="O95479-1"/>
    <property type="nucleotide sequence ID" value="XM_017002865.3"/>
</dbReference>
<dbReference type="RefSeq" id="XP_047290958.1">
    <molecule id="O95479-2"/>
    <property type="nucleotide sequence ID" value="XM_047435002.1"/>
</dbReference>
<dbReference type="RefSeq" id="XP_047290961.1">
    <molecule id="O95479-1"/>
    <property type="nucleotide sequence ID" value="XM_047435005.1"/>
</dbReference>
<dbReference type="PDB" id="8EM2">
    <property type="method" value="EM"/>
    <property type="resolution" value="3.02 A"/>
    <property type="chains" value="A/B=1-791"/>
</dbReference>
<dbReference type="PDBsum" id="8EM2"/>
<dbReference type="EMDB" id="EMD-28232"/>
<dbReference type="SMR" id="O95479"/>
<dbReference type="BioGRID" id="114933">
    <property type="interactions" value="41"/>
</dbReference>
<dbReference type="FunCoup" id="O95479">
    <property type="interactions" value="732"/>
</dbReference>
<dbReference type="IntAct" id="O95479">
    <property type="interactions" value="22"/>
</dbReference>
<dbReference type="STRING" id="9606.ENSP00000473348"/>
<dbReference type="BindingDB" id="O95479"/>
<dbReference type="DrugBank" id="DB00157">
    <property type="generic name" value="NADH"/>
</dbReference>
<dbReference type="GlyConnect" id="1264">
    <property type="glycosylation" value="3 N-Linked glycans (1 site)"/>
</dbReference>
<dbReference type="GlyCosmos" id="O95479">
    <property type="glycosylation" value="3 sites, 3 glycans"/>
</dbReference>
<dbReference type="GlyGen" id="O95479">
    <property type="glycosylation" value="4 sites, 19 N-linked glycans (2 sites), 1 O-linked glycan (1 site)"/>
</dbReference>
<dbReference type="iPTMnet" id="O95479"/>
<dbReference type="PhosphoSitePlus" id="O95479"/>
<dbReference type="SwissPalm" id="O95479"/>
<dbReference type="BioMuta" id="H6PD"/>
<dbReference type="jPOST" id="O95479"/>
<dbReference type="MassIVE" id="O95479"/>
<dbReference type="PaxDb" id="9606-ENSP00000473348"/>
<dbReference type="PeptideAtlas" id="O95479"/>
<dbReference type="ProteomicsDB" id="50910"/>
<dbReference type="Pumba" id="O95479"/>
<dbReference type="Antibodypedia" id="1350">
    <property type="antibodies" value="321 antibodies from 28 providers"/>
</dbReference>
<dbReference type="DNASU" id="9563"/>
<dbReference type="Ensembl" id="ENST00000377403.7">
    <molecule id="O95479-1"/>
    <property type="protein sequence ID" value="ENSP00000366620.2"/>
    <property type="gene ID" value="ENSG00000049239.13"/>
</dbReference>
<dbReference type="Ensembl" id="ENST00000602477.1">
    <molecule id="O95479-2"/>
    <property type="protein sequence ID" value="ENSP00000473348.1"/>
    <property type="gene ID" value="ENSG00000049239.13"/>
</dbReference>
<dbReference type="GeneID" id="9563"/>
<dbReference type="KEGG" id="hsa:9563"/>
<dbReference type="MANE-Select" id="ENST00000377403.7">
    <property type="protein sequence ID" value="ENSP00000366620.2"/>
    <property type="RefSeq nucleotide sequence ID" value="NM_004285.4"/>
    <property type="RefSeq protein sequence ID" value="NP_004276.2"/>
</dbReference>
<dbReference type="UCSC" id="uc001apt.4">
    <molecule id="O95479-1"/>
    <property type="organism name" value="human"/>
</dbReference>
<dbReference type="AGR" id="HGNC:4795"/>
<dbReference type="CTD" id="9563"/>
<dbReference type="DisGeNET" id="9563"/>
<dbReference type="GeneCards" id="H6PD"/>
<dbReference type="HGNC" id="HGNC:4795">
    <property type="gene designation" value="H6PD"/>
</dbReference>
<dbReference type="HPA" id="ENSG00000049239">
    <property type="expression patterns" value="Tissue enhanced (liver)"/>
</dbReference>
<dbReference type="MalaCards" id="H6PD"/>
<dbReference type="MIM" id="138090">
    <property type="type" value="gene"/>
</dbReference>
<dbReference type="MIM" id="604931">
    <property type="type" value="phenotype"/>
</dbReference>
<dbReference type="neXtProt" id="NX_O95479"/>
<dbReference type="OpenTargets" id="ENSG00000049239"/>
<dbReference type="Orphanet" id="168588">
    <property type="disease" value="Hyperandrogenism due to cortisone reductase deficiency"/>
</dbReference>
<dbReference type="PharmGKB" id="PA29170"/>
<dbReference type="VEuPathDB" id="HostDB:ENSG00000049239"/>
<dbReference type="eggNOG" id="KOG0563">
    <property type="taxonomic scope" value="Eukaryota"/>
</dbReference>
<dbReference type="eggNOG" id="KOG3147">
    <property type="taxonomic scope" value="Eukaryota"/>
</dbReference>
<dbReference type="GeneTree" id="ENSGT00530000063435"/>
<dbReference type="HOGENOM" id="CLU_018975_0_0_1"/>
<dbReference type="InParanoid" id="O95479"/>
<dbReference type="OrthoDB" id="60984at2759"/>
<dbReference type="PAN-GO" id="O95479">
    <property type="GO annotations" value="4 GO annotations based on evolutionary models"/>
</dbReference>
<dbReference type="PhylomeDB" id="O95479"/>
<dbReference type="TreeFam" id="TF354247"/>
<dbReference type="BioCyc" id="MetaCyc:HS00614-MONOMER"/>
<dbReference type="PathwayCommons" id="O95479"/>
<dbReference type="SABIO-RK" id="O95479"/>
<dbReference type="SignaLink" id="O95479"/>
<dbReference type="UniPathway" id="UPA00115">
    <property type="reaction ID" value="UER00408"/>
</dbReference>
<dbReference type="UniPathway" id="UPA00115">
    <property type="reaction ID" value="UER00409"/>
</dbReference>
<dbReference type="BioGRID-ORCS" id="9563">
    <property type="hits" value="4 hits in 1146 CRISPR screens"/>
</dbReference>
<dbReference type="ChiTaRS" id="H6PD">
    <property type="organism name" value="human"/>
</dbReference>
<dbReference type="GeneWiki" id="H6PD"/>
<dbReference type="GenomeRNAi" id="9563"/>
<dbReference type="Pharos" id="O95479">
    <property type="development level" value="Tbio"/>
</dbReference>
<dbReference type="PRO" id="PR:O95479"/>
<dbReference type="Proteomes" id="UP000005640">
    <property type="component" value="Chromosome 1"/>
</dbReference>
<dbReference type="RNAct" id="O95479">
    <property type="molecule type" value="protein"/>
</dbReference>
<dbReference type="Bgee" id="ENSG00000049239">
    <property type="expression patterns" value="Expressed in parotid gland and 197 other cell types or tissues"/>
</dbReference>
<dbReference type="GO" id="GO:0005783">
    <property type="term" value="C:endoplasmic reticulum"/>
    <property type="evidence" value="ECO:0000318"/>
    <property type="project" value="GO_Central"/>
</dbReference>
<dbReference type="GO" id="GO:0005788">
    <property type="term" value="C:endoplasmic reticulum lumen"/>
    <property type="evidence" value="ECO:0000314"/>
    <property type="project" value="UniProtKB"/>
</dbReference>
<dbReference type="GO" id="GO:0016529">
    <property type="term" value="C:sarcoplasmic reticulum"/>
    <property type="evidence" value="ECO:0007669"/>
    <property type="project" value="Ensembl"/>
</dbReference>
<dbReference type="GO" id="GO:0017057">
    <property type="term" value="F:6-phosphogluconolactonase activity"/>
    <property type="evidence" value="ECO:0000250"/>
    <property type="project" value="UniProtKB"/>
</dbReference>
<dbReference type="GO" id="GO:0030246">
    <property type="term" value="F:carbohydrate binding"/>
    <property type="evidence" value="ECO:0007669"/>
    <property type="project" value="Ensembl"/>
</dbReference>
<dbReference type="GO" id="GO:0047934">
    <property type="term" value="F:glucose 1-dehydrogenase (NAD+) activity"/>
    <property type="evidence" value="ECO:0007669"/>
    <property type="project" value="RHEA"/>
</dbReference>
<dbReference type="GO" id="GO:0047935">
    <property type="term" value="F:glucose 1-dehydrogenase (NADP+) activity"/>
    <property type="evidence" value="ECO:0007669"/>
    <property type="project" value="RHEA"/>
</dbReference>
<dbReference type="GO" id="GO:0004345">
    <property type="term" value="F:glucose-6-phosphate dehydrogenase activity"/>
    <property type="evidence" value="ECO:0000314"/>
    <property type="project" value="UniProtKB"/>
</dbReference>
<dbReference type="GO" id="GO:0050661">
    <property type="term" value="F:NADP binding"/>
    <property type="evidence" value="ECO:0007669"/>
    <property type="project" value="Ensembl"/>
</dbReference>
<dbReference type="GO" id="GO:0006006">
    <property type="term" value="P:glucose metabolic process"/>
    <property type="evidence" value="ECO:0000318"/>
    <property type="project" value="GO_Central"/>
</dbReference>
<dbReference type="GO" id="GO:0009051">
    <property type="term" value="P:pentose-phosphate shunt, oxidative branch"/>
    <property type="evidence" value="ECO:0000315"/>
    <property type="project" value="UniProtKB"/>
</dbReference>
<dbReference type="GO" id="GO:2000064">
    <property type="term" value="P:regulation of cortisol biosynthetic process"/>
    <property type="evidence" value="ECO:0000315"/>
    <property type="project" value="UniProtKB"/>
</dbReference>
<dbReference type="GO" id="GO:0097305">
    <property type="term" value="P:response to alcohol"/>
    <property type="evidence" value="ECO:0007669"/>
    <property type="project" value="Ensembl"/>
</dbReference>
<dbReference type="GO" id="GO:0031667">
    <property type="term" value="P:response to nutrient levels"/>
    <property type="evidence" value="ECO:0007669"/>
    <property type="project" value="Ensembl"/>
</dbReference>
<dbReference type="CDD" id="cd01400">
    <property type="entry name" value="6PGL"/>
    <property type="match status" value="1"/>
</dbReference>
<dbReference type="FunFam" id="3.30.360.10:FF:000032">
    <property type="entry name" value="GDH/6PGL endoplasmic bifunctional protein"/>
    <property type="match status" value="1"/>
</dbReference>
<dbReference type="FunFam" id="3.40.50.720:FF:000390">
    <property type="entry name" value="GDH/6PGL endoplasmic bifunctional protein"/>
    <property type="match status" value="1"/>
</dbReference>
<dbReference type="FunFam" id="3.40.50.1360:FF:000015">
    <property type="entry name" value="Hexose-6-phosphate dehydrogenase/glucose 1-dehydrogenase"/>
    <property type="match status" value="1"/>
</dbReference>
<dbReference type="Gene3D" id="3.40.50.1360">
    <property type="match status" value="1"/>
</dbReference>
<dbReference type="Gene3D" id="3.30.360.10">
    <property type="entry name" value="Dihydrodipicolinate Reductase, domain 2"/>
    <property type="match status" value="1"/>
</dbReference>
<dbReference type="Gene3D" id="3.40.50.720">
    <property type="entry name" value="NAD(P)-binding Rossmann-like Domain"/>
    <property type="match status" value="1"/>
</dbReference>
<dbReference type="InterPro" id="IPR005900">
    <property type="entry name" value="6-phosphogluconolactonase_DevB"/>
</dbReference>
<dbReference type="InterPro" id="IPR001282">
    <property type="entry name" value="G6P_DH"/>
</dbReference>
<dbReference type="InterPro" id="IPR019796">
    <property type="entry name" value="G6P_DH_AS"/>
</dbReference>
<dbReference type="InterPro" id="IPR022675">
    <property type="entry name" value="G6P_DH_C"/>
</dbReference>
<dbReference type="InterPro" id="IPR022674">
    <property type="entry name" value="G6P_DH_NAD-bd"/>
</dbReference>
<dbReference type="InterPro" id="IPR006148">
    <property type="entry name" value="Glc/Gal-6P_isomerase"/>
</dbReference>
<dbReference type="InterPro" id="IPR036291">
    <property type="entry name" value="NAD(P)-bd_dom_sf"/>
</dbReference>
<dbReference type="InterPro" id="IPR037171">
    <property type="entry name" value="NagB/RpiA_transferase-like"/>
</dbReference>
<dbReference type="NCBIfam" id="TIGR01198">
    <property type="entry name" value="pgl"/>
    <property type="match status" value="1"/>
</dbReference>
<dbReference type="PANTHER" id="PTHR23429:SF7">
    <property type="entry name" value="GDH_6PGL ENDOPLASMIC BIFUNCTIONAL PROTEIN"/>
    <property type="match status" value="1"/>
</dbReference>
<dbReference type="PANTHER" id="PTHR23429">
    <property type="entry name" value="GLUCOSE-6-PHOSPHATE 1-DEHYDROGENASE G6PD"/>
    <property type="match status" value="1"/>
</dbReference>
<dbReference type="Pfam" id="PF02781">
    <property type="entry name" value="G6PD_C"/>
    <property type="match status" value="1"/>
</dbReference>
<dbReference type="Pfam" id="PF00479">
    <property type="entry name" value="G6PD_N"/>
    <property type="match status" value="1"/>
</dbReference>
<dbReference type="Pfam" id="PF01182">
    <property type="entry name" value="Glucosamine_iso"/>
    <property type="match status" value="1"/>
</dbReference>
<dbReference type="PRINTS" id="PR00079">
    <property type="entry name" value="G6PDHDRGNASE"/>
</dbReference>
<dbReference type="SUPFAM" id="SSF55347">
    <property type="entry name" value="Glyceraldehyde-3-phosphate dehydrogenase-like, C-terminal domain"/>
    <property type="match status" value="1"/>
</dbReference>
<dbReference type="SUPFAM" id="SSF51735">
    <property type="entry name" value="NAD(P)-binding Rossmann-fold domains"/>
    <property type="match status" value="1"/>
</dbReference>
<dbReference type="SUPFAM" id="SSF100950">
    <property type="entry name" value="NagB/RpiA/CoA transferase-like"/>
    <property type="match status" value="1"/>
</dbReference>
<dbReference type="PROSITE" id="PS00069">
    <property type="entry name" value="G6P_DEHYDROGENASE"/>
    <property type="match status" value="1"/>
</dbReference>
<feature type="signal peptide" evidence="3">
    <location>
        <begin position="1"/>
        <end position="19"/>
    </location>
</feature>
<feature type="chain" id="PRO_0000010442" description="GDH/6PGL endoplasmic bifunctional protein">
    <location>
        <begin position="20"/>
        <end position="791"/>
    </location>
</feature>
<feature type="region of interest" description="Hexose-6-phosphate dehydrogenase" evidence="14">
    <location>
        <begin position="20"/>
        <end position="526"/>
    </location>
</feature>
<feature type="region of interest" description="Linker" evidence="14">
    <location>
        <begin position="527"/>
        <end position="540"/>
    </location>
</feature>
<feature type="region of interest" description="6-phosphogluconolactonase" evidence="14">
    <location>
        <begin position="541"/>
        <end position="791"/>
    </location>
</feature>
<feature type="active site" description="Proton acceptor" evidence="1">
    <location>
        <position position="267"/>
    </location>
</feature>
<feature type="binding site" evidence="2">
    <location>
        <begin position="32"/>
        <end position="39"/>
    </location>
    <ligand>
        <name>NADP(+)</name>
        <dbReference type="ChEBI" id="CHEBI:58349"/>
        <label>1</label>
    </ligand>
</feature>
<feature type="binding site" evidence="2">
    <location>
        <position position="149"/>
    </location>
    <ligand>
        <name>NADP(+)</name>
        <dbReference type="ChEBI" id="CHEBI:58349"/>
        <label>1</label>
    </ligand>
</feature>
<feature type="binding site" evidence="2">
    <location>
        <position position="174"/>
    </location>
    <ligand>
        <name>D-glucose 6-phosphate</name>
        <dbReference type="ChEBI" id="CHEBI:61548"/>
    </ligand>
</feature>
<feature type="binding site" evidence="2">
    <location>
        <position position="174"/>
    </location>
    <ligand>
        <name>NADP(+)</name>
        <dbReference type="ChEBI" id="CHEBI:58349"/>
        <label>1</label>
    </ligand>
</feature>
<feature type="binding site" evidence="2">
    <location>
        <begin position="204"/>
        <end position="208"/>
    </location>
    <ligand>
        <name>D-glucose 6-phosphate</name>
        <dbReference type="ChEBI" id="CHEBI:61548"/>
    </ligand>
</feature>
<feature type="binding site" evidence="2">
    <location>
        <position position="243"/>
    </location>
    <ligand>
        <name>D-glucose 6-phosphate</name>
        <dbReference type="ChEBI" id="CHEBI:61548"/>
    </ligand>
</feature>
<feature type="binding site" evidence="2">
    <location>
        <position position="262"/>
    </location>
    <ligand>
        <name>D-glucose 6-phosphate</name>
        <dbReference type="ChEBI" id="CHEBI:61548"/>
    </ligand>
</feature>
<feature type="binding site" evidence="2">
    <location>
        <position position="360"/>
    </location>
    <ligand>
        <name>D-glucose 6-phosphate</name>
        <dbReference type="ChEBI" id="CHEBI:61548"/>
    </ligand>
</feature>
<feature type="binding site" evidence="2">
    <location>
        <position position="365"/>
    </location>
    <ligand>
        <name>D-glucose 6-phosphate</name>
        <dbReference type="ChEBI" id="CHEBI:61548"/>
    </ligand>
</feature>
<feature type="binding site" evidence="2">
    <location>
        <position position="370"/>
    </location>
    <ligand>
        <name>NADP(+)</name>
        <dbReference type="ChEBI" id="CHEBI:58349"/>
        <label>2</label>
    </ligand>
</feature>
<feature type="binding site" evidence="2">
    <location>
        <position position="617"/>
    </location>
    <ligand>
        <name>NADP(+)</name>
        <dbReference type="ChEBI" id="CHEBI:58349"/>
        <label>2</label>
    </ligand>
</feature>
<feature type="modified residue" description="Pyrrolidone carboxylic acid" evidence="3">
    <location>
        <position position="20"/>
    </location>
</feature>
<feature type="modified residue" description="N6-succinyllysine" evidence="4">
    <location>
        <position position="208"/>
    </location>
</feature>
<feature type="glycosylation site" description="N-linked (GlcNAc...) asparagine" evidence="11">
    <location>
        <position position="157"/>
    </location>
</feature>
<feature type="glycosylation site" description="N-linked (GlcNAc...) asparagine" evidence="11">
    <location>
        <position position="282"/>
    </location>
</feature>
<feature type="glycosylation site" description="N-linked (GlcNAc...) asparagine" evidence="5">
    <location>
        <position position="683"/>
    </location>
</feature>
<feature type="splice variant" id="VSP_060485" description="In isoform 2.">
    <original>M</original>
    <variation>MLAEPFNWHPGM</variation>
    <location>
        <position position="1"/>
    </location>
</feature>
<feature type="sequence variant" id="VAR_069193" description="In CORTRD1; no effect on protein abundance; decreased glucose-6-phosphate dehydrogenase activity; dbSNP:rs1641137593." evidence="12">
    <original>P</original>
    <variation>L</variation>
    <location>
        <position position="146"/>
    </location>
</feature>
<feature type="sequence variant" id="VAR_049117" description="In dbSNP:rs34603401." evidence="9">
    <original>D</original>
    <variation>A</variation>
    <location>
        <position position="151"/>
    </location>
</feature>
<feature type="sequence variant" id="VAR_049118" description="In dbSNP:rs35525021.">
    <original>R</original>
    <variation>Q</variation>
    <location>
        <position position="218"/>
    </location>
</feature>
<feature type="sequence variant" id="VAR_083053" description="In CORTRD1; loss of glucose-6-phosphate dehydrogenase activity." evidence="10">
    <location>
        <begin position="316"/>
        <end position="791"/>
    </location>
</feature>
<feature type="sequence variant" id="VAR_083054" description="In CORTRD1; loss of glucose-6-phosphate dehydrogenase activity." evidence="12">
    <location>
        <begin position="325"/>
        <end position="791"/>
    </location>
</feature>
<feature type="sequence variant" id="VAR_083055" description="In CORTRD1; loss of glucose-6-phosphate dehydrogenase activity; dbSNP:rs387907167." evidence="10">
    <original>G</original>
    <variation>D</variation>
    <location>
        <position position="359"/>
    </location>
</feature>
<feature type="sequence variant" id="VAR_083056" description="In CORTRD1; loss of glucose-6-phosphate dehydrogenase activity." evidence="12">
    <location>
        <begin position="446"/>
        <end position="791"/>
    </location>
</feature>
<feature type="sequence variant" id="VAR_026487" description="In CORTRD1; uncertain significance; no effect on glucose-6-phosphate dehydrogenase activity; however an effect was originally observed; dbSNP:rs6688832." evidence="7 8 9 10">
    <original>R</original>
    <variation>Q</variation>
    <location>
        <position position="453"/>
    </location>
</feature>
<feature type="sequence variant" id="VAR_049119" description="In dbSNP:rs35404275.">
    <original>N</original>
    <variation>D</variation>
    <location>
        <position position="484"/>
    </location>
</feature>
<feature type="sequence variant" id="VAR_049120" description="In dbSNP:rs17368528.">
    <original>P</original>
    <variation>L</variation>
    <location>
        <position position="554"/>
    </location>
</feature>
<feature type="sequence conflict" description="In Ref. 1; CAA10071." evidence="14" ref="1">
    <original>A</original>
    <variation>G</variation>
    <location>
        <position position="339"/>
    </location>
</feature>
<feature type="strand" evidence="18">
    <location>
        <begin position="25"/>
        <end position="30"/>
    </location>
</feature>
<feature type="helix" evidence="18">
    <location>
        <begin position="36"/>
        <end position="40"/>
    </location>
</feature>
<feature type="helix" evidence="18">
    <location>
        <begin position="42"/>
        <end position="53"/>
    </location>
</feature>
<feature type="strand" evidence="18">
    <location>
        <begin position="60"/>
        <end position="68"/>
    </location>
</feature>
<feature type="helix" evidence="18">
    <location>
        <begin position="70"/>
        <end position="82"/>
    </location>
</feature>
<feature type="helix" evidence="18">
    <location>
        <begin position="92"/>
        <end position="105"/>
    </location>
</feature>
<feature type="strand" evidence="18">
    <location>
        <begin position="107"/>
        <end position="110"/>
    </location>
</feature>
<feature type="strand" evidence="18">
    <location>
        <begin position="112"/>
        <end position="114"/>
    </location>
</feature>
<feature type="helix" evidence="18">
    <location>
        <begin position="115"/>
        <end position="131"/>
    </location>
</feature>
<feature type="strand" evidence="18">
    <location>
        <begin position="135"/>
        <end position="141"/>
    </location>
</feature>
<feature type="helix" evidence="18">
    <location>
        <begin position="150"/>
        <end position="158"/>
    </location>
</feature>
<feature type="strand" evidence="18">
    <location>
        <begin position="163"/>
        <end position="165"/>
    </location>
</feature>
<feature type="strand" evidence="18">
    <location>
        <begin position="170"/>
        <end position="172"/>
    </location>
</feature>
<feature type="helix" evidence="18">
    <location>
        <begin position="180"/>
        <end position="191"/>
    </location>
</feature>
<feature type="turn" evidence="18">
    <location>
        <begin position="196"/>
        <end position="198"/>
    </location>
</feature>
<feature type="strand" evidence="18">
    <location>
        <begin position="200"/>
        <end position="202"/>
    </location>
</feature>
<feature type="helix" evidence="18">
    <location>
        <begin position="205"/>
        <end position="207"/>
    </location>
</feature>
<feature type="helix" evidence="18">
    <location>
        <begin position="211"/>
        <end position="213"/>
    </location>
</feature>
<feature type="helix" evidence="18">
    <location>
        <begin position="214"/>
        <end position="219"/>
    </location>
</feature>
<feature type="turn" evidence="18">
    <location>
        <begin position="223"/>
        <end position="228"/>
    </location>
</feature>
<feature type="helix" evidence="18">
    <location>
        <begin position="231"/>
        <end position="233"/>
    </location>
</feature>
<feature type="strand" evidence="18">
    <location>
        <begin position="234"/>
        <end position="242"/>
    </location>
</feature>
<feature type="strand" evidence="18">
    <location>
        <begin position="247"/>
        <end position="249"/>
    </location>
</feature>
<feature type="turn" evidence="18">
    <location>
        <begin position="252"/>
        <end position="257"/>
    </location>
</feature>
<feature type="helix" evidence="18">
    <location>
        <begin position="258"/>
        <end position="262"/>
    </location>
</feature>
<feature type="helix" evidence="18">
    <location>
        <begin position="263"/>
        <end position="267"/>
    </location>
</feature>
<feature type="helix" evidence="18">
    <location>
        <begin position="268"/>
        <end position="275"/>
    </location>
</feature>
<feature type="helix" evidence="18">
    <location>
        <begin position="287"/>
        <end position="298"/>
    </location>
</feature>
<feature type="strand" evidence="18">
    <location>
        <begin position="308"/>
        <end position="313"/>
    </location>
</feature>
<feature type="helix" evidence="18">
    <location>
        <begin position="314"/>
        <end position="323"/>
    </location>
</feature>
<feature type="strand" evidence="18">
    <location>
        <begin position="336"/>
        <end position="342"/>
    </location>
</feature>
<feature type="strand" evidence="18">
    <location>
        <begin position="346"/>
        <end position="351"/>
    </location>
</feature>
<feature type="strand" evidence="18">
    <location>
        <begin position="354"/>
        <end position="361"/>
    </location>
</feature>
<feature type="strand" evidence="18">
    <location>
        <begin position="366"/>
        <end position="373"/>
    </location>
</feature>
<feature type="helix" evidence="18">
    <location>
        <begin position="383"/>
        <end position="385"/>
    </location>
</feature>
<feature type="turn" evidence="18">
    <location>
        <begin position="388"/>
        <end position="390"/>
    </location>
</feature>
<feature type="strand" evidence="18">
    <location>
        <begin position="392"/>
        <end position="394"/>
    </location>
</feature>
<feature type="strand" evidence="18">
    <location>
        <begin position="397"/>
        <end position="404"/>
    </location>
</feature>
<feature type="turn" evidence="18">
    <location>
        <begin position="405"/>
        <end position="407"/>
    </location>
</feature>
<feature type="strand" evidence="18">
    <location>
        <begin position="411"/>
        <end position="415"/>
    </location>
</feature>
<feature type="turn" evidence="18">
    <location>
        <begin position="416"/>
        <end position="418"/>
    </location>
</feature>
<feature type="strand" evidence="18">
    <location>
        <begin position="427"/>
        <end position="429"/>
    </location>
</feature>
<feature type="helix" evidence="18">
    <location>
        <begin position="443"/>
        <end position="445"/>
    </location>
</feature>
<feature type="strand" evidence="18">
    <location>
        <begin position="446"/>
        <end position="453"/>
    </location>
</feature>
<feature type="helix" evidence="18">
    <location>
        <begin position="457"/>
        <end position="467"/>
    </location>
</feature>
<feature type="helix" evidence="18">
    <location>
        <begin position="470"/>
        <end position="472"/>
    </location>
</feature>
<feature type="helix" evidence="18">
    <location>
        <begin position="476"/>
        <end position="492"/>
    </location>
</feature>
<feature type="strand" evidence="18">
    <location>
        <begin position="499"/>
        <end position="501"/>
    </location>
</feature>
<feature type="helix" evidence="18">
    <location>
        <begin position="504"/>
        <end position="506"/>
    </location>
</feature>
<feature type="strand" evidence="18">
    <location>
        <begin position="513"/>
        <end position="516"/>
    </location>
</feature>
<feature type="strand" evidence="18">
    <location>
        <begin position="519"/>
        <end position="524"/>
    </location>
</feature>
<organism>
    <name type="scientific">Homo sapiens</name>
    <name type="common">Human</name>
    <dbReference type="NCBI Taxonomy" id="9606"/>
    <lineage>
        <taxon>Eukaryota</taxon>
        <taxon>Metazoa</taxon>
        <taxon>Chordata</taxon>
        <taxon>Craniata</taxon>
        <taxon>Vertebrata</taxon>
        <taxon>Euteleostomi</taxon>
        <taxon>Mammalia</taxon>
        <taxon>Eutheria</taxon>
        <taxon>Euarchontoglires</taxon>
        <taxon>Primates</taxon>
        <taxon>Haplorrhini</taxon>
        <taxon>Catarrhini</taxon>
        <taxon>Hominidae</taxon>
        <taxon>Homo</taxon>
    </lineage>
</organism>
<evidence type="ECO:0000250" key="1">
    <source>
        <dbReference type="UniProtKB" id="P11411"/>
    </source>
</evidence>
<evidence type="ECO:0000250" key="2">
    <source>
        <dbReference type="UniProtKB" id="P11413"/>
    </source>
</evidence>
<evidence type="ECO:0000250" key="3">
    <source>
        <dbReference type="UniProtKB" id="P56201"/>
    </source>
</evidence>
<evidence type="ECO:0000250" key="4">
    <source>
        <dbReference type="UniProtKB" id="Q8CFX1"/>
    </source>
</evidence>
<evidence type="ECO:0000255" key="5"/>
<evidence type="ECO:0000269" key="6">
    <source>
    </source>
</evidence>
<evidence type="ECO:0000269" key="7">
    <source>
    </source>
</evidence>
<evidence type="ECO:0000269" key="8">
    <source>
    </source>
</evidence>
<evidence type="ECO:0000269" key="9">
    <source>
    </source>
</evidence>
<evidence type="ECO:0000269" key="10">
    <source>
    </source>
</evidence>
<evidence type="ECO:0000269" key="11">
    <source>
    </source>
</evidence>
<evidence type="ECO:0000269" key="12">
    <source>
    </source>
</evidence>
<evidence type="ECO:0000303" key="13">
    <source>
    </source>
</evidence>
<evidence type="ECO:0000305" key="14"/>
<evidence type="ECO:0000305" key="15">
    <source>
    </source>
</evidence>
<evidence type="ECO:0000305" key="16">
    <source>
    </source>
</evidence>
<evidence type="ECO:0000312" key="17">
    <source>
        <dbReference type="HGNC" id="HGNC:4795"/>
    </source>
</evidence>
<evidence type="ECO:0007829" key="18">
    <source>
        <dbReference type="PDB" id="8EM2"/>
    </source>
</evidence>
<protein>
    <recommendedName>
        <fullName evidence="4">GDH/6PGL endoplasmic bifunctional protein</fullName>
    </recommendedName>
    <domain>
        <recommendedName>
            <fullName evidence="13">Hexose-6-phosphate dehydrogenase</fullName>
        </recommendedName>
        <alternativeName>
            <fullName evidence="13">Glucose 1-dehydrogenase</fullName>
            <shortName evidence="13">GDH</shortName>
            <ecNumber evidence="4">1.1.1.47</ecNumber>
        </alternativeName>
        <alternativeName>
            <fullName evidence="16">Glucose-6-phosphate dehydrogenase</fullName>
            <ecNumber evidence="10">1.1.1.363</ecNumber>
        </alternativeName>
    </domain>
    <domain>
        <recommendedName>
            <fullName evidence="4">6-phosphogluconolactonase</fullName>
            <shortName evidence="4">6PGL</shortName>
            <ecNumber evidence="4">3.1.1.31</ecNumber>
        </recommendedName>
    </domain>
</protein>
<proteinExistence type="evidence at protein level"/>
<keyword id="KW-0002">3D-structure</keyword>
<keyword id="KW-0025">Alternative splicing</keyword>
<keyword id="KW-0119">Carbohydrate metabolism</keyword>
<keyword id="KW-0225">Disease variant</keyword>
<keyword id="KW-0256">Endoplasmic reticulum</keyword>
<keyword id="KW-0313">Glucose metabolism</keyword>
<keyword id="KW-0325">Glycoprotein</keyword>
<keyword id="KW-0378">Hydrolase</keyword>
<keyword id="KW-0511">Multifunctional enzyme</keyword>
<keyword id="KW-0520">NAD</keyword>
<keyword id="KW-0521">NADP</keyword>
<keyword id="KW-0560">Oxidoreductase</keyword>
<keyword id="KW-1267">Proteomics identification</keyword>
<keyword id="KW-0873">Pyrrolidone carboxylic acid</keyword>
<keyword id="KW-1185">Reference proteome</keyword>
<keyword id="KW-0732">Signal</keyword>
<comment type="function">
    <text evidence="4 7 10 12">Bifunctional enzyme localized in the lumen of the endoplasmic reticulum that catalyzes the first two steps of the oxidative branch of the pentose phosphate pathway/shunt, an alternative to glycolysis and a major source of reducing power and metabolic intermediates for biosynthetic processes (By similarity). Has a hexose-6-phosphate dehydrogenase activity, with broad substrate specificity compared to glucose-6-phosphate 1-dehydrogenase/G6PD, and catalyzes the first step of the pentose phosphate pathway (PubMed:12858176, PubMed:18628520, PubMed:23132696). In addition, acts as a 6-phosphogluconolactonase and catalyzes the second step of the pentose phosphate pathway (By similarity). May have a dehydrogenase activity for alternative substrates including glucosamine 6-phosphate and glucose 6-sulfate (By similarity). The main function of this enzyme is to provide reducing equivalents such as NADPH to maintain the adequate levels of reductive cofactors in the oxidizing environment of the endoplasmic reticulum (PubMed:12858176, PubMed:18628520, PubMed:23132696). By producing NADPH that is needed by reductases of the lumen of the endoplasmic reticulum like corticosteroid 11-beta-dehydrogenase isozyme 1/HSD11B1, indirectly regulates their activity (PubMed:18628520).</text>
</comment>
<comment type="catalytic activity">
    <reaction evidence="10 12">
        <text>D-glucose 6-phosphate + NADP(+) = 6-phospho-D-glucono-1,5-lactone + NADPH + H(+)</text>
        <dbReference type="Rhea" id="RHEA:15841"/>
        <dbReference type="ChEBI" id="CHEBI:15378"/>
        <dbReference type="ChEBI" id="CHEBI:57783"/>
        <dbReference type="ChEBI" id="CHEBI:57955"/>
        <dbReference type="ChEBI" id="CHEBI:58349"/>
        <dbReference type="ChEBI" id="CHEBI:61548"/>
        <dbReference type="EC" id="1.1.1.363"/>
    </reaction>
    <physiologicalReaction direction="left-to-right" evidence="16">
        <dbReference type="Rhea" id="RHEA:15842"/>
    </physiologicalReaction>
</comment>
<comment type="catalytic activity">
    <reaction evidence="4">
        <text>D-glucose 6-phosphate + NAD(+) = 6-phospho-D-glucono-1,5-lactone + NADH + H(+)</text>
        <dbReference type="Rhea" id="RHEA:38215"/>
        <dbReference type="ChEBI" id="CHEBI:15378"/>
        <dbReference type="ChEBI" id="CHEBI:57540"/>
        <dbReference type="ChEBI" id="CHEBI:57945"/>
        <dbReference type="ChEBI" id="CHEBI:57955"/>
        <dbReference type="ChEBI" id="CHEBI:61548"/>
        <dbReference type="EC" id="1.1.1.363"/>
    </reaction>
    <physiologicalReaction direction="left-to-right" evidence="4">
        <dbReference type="Rhea" id="RHEA:38216"/>
    </physiologicalReaction>
</comment>
<comment type="catalytic activity">
    <reaction evidence="4">
        <text>6-phospho-D-glucono-1,5-lactone + H2O = 6-phospho-D-gluconate + H(+)</text>
        <dbReference type="Rhea" id="RHEA:12556"/>
        <dbReference type="ChEBI" id="CHEBI:15377"/>
        <dbReference type="ChEBI" id="CHEBI:15378"/>
        <dbReference type="ChEBI" id="CHEBI:57955"/>
        <dbReference type="ChEBI" id="CHEBI:58759"/>
        <dbReference type="EC" id="3.1.1.31"/>
    </reaction>
    <physiologicalReaction direction="left-to-right" evidence="4">
        <dbReference type="Rhea" id="RHEA:12557"/>
    </physiologicalReaction>
</comment>
<comment type="catalytic activity">
    <reaction evidence="4">
        <text>2-deoxy-D-glucose 6-phosphate + NAD(+) = 2-deoxy-6-phospho-D-glucono-1,5-lactone + NADH + H(+)</text>
        <dbReference type="Rhea" id="RHEA:62064"/>
        <dbReference type="ChEBI" id="CHEBI:15378"/>
        <dbReference type="ChEBI" id="CHEBI:57540"/>
        <dbReference type="ChEBI" id="CHEBI:57945"/>
        <dbReference type="ChEBI" id="CHEBI:84760"/>
        <dbReference type="ChEBI" id="CHEBI:145420"/>
    </reaction>
    <physiologicalReaction direction="left-to-right" evidence="4">
        <dbReference type="Rhea" id="RHEA:62065"/>
    </physiologicalReaction>
</comment>
<comment type="catalytic activity">
    <reaction evidence="4">
        <text>2-deoxy-D-glucose 6-phosphate + NADP(+) = 2-deoxy-6-phospho-D-glucono-1,5-lactone + NADPH + H(+)</text>
        <dbReference type="Rhea" id="RHEA:62068"/>
        <dbReference type="ChEBI" id="CHEBI:15378"/>
        <dbReference type="ChEBI" id="CHEBI:57783"/>
        <dbReference type="ChEBI" id="CHEBI:58349"/>
        <dbReference type="ChEBI" id="CHEBI:84760"/>
        <dbReference type="ChEBI" id="CHEBI:145420"/>
    </reaction>
    <physiologicalReaction direction="left-to-right" evidence="4">
        <dbReference type="Rhea" id="RHEA:62069"/>
    </physiologicalReaction>
</comment>
<comment type="catalytic activity">
    <reaction evidence="7">
        <text>D-galactose 6-phosphate + NADP(+) = 6-phospho-D-galactono-1,5-lactone + NADPH + H(+)</text>
        <dbReference type="Rhea" id="RHEA:62072"/>
        <dbReference type="ChEBI" id="CHEBI:15378"/>
        <dbReference type="ChEBI" id="CHEBI:57783"/>
        <dbReference type="ChEBI" id="CHEBI:58349"/>
        <dbReference type="ChEBI" id="CHEBI:91004"/>
        <dbReference type="ChEBI" id="CHEBI:145419"/>
    </reaction>
    <physiologicalReaction direction="left-to-right" evidence="15">
        <dbReference type="Rhea" id="RHEA:62073"/>
    </physiologicalReaction>
</comment>
<comment type="catalytic activity">
    <reaction evidence="4">
        <text>D-galactose 6-phosphate + NAD(+) = 6-phospho-D-galactono-1,5-lactone + NADH + H(+)</text>
        <dbReference type="Rhea" id="RHEA:62076"/>
        <dbReference type="ChEBI" id="CHEBI:15378"/>
        <dbReference type="ChEBI" id="CHEBI:57540"/>
        <dbReference type="ChEBI" id="CHEBI:57945"/>
        <dbReference type="ChEBI" id="CHEBI:91004"/>
        <dbReference type="ChEBI" id="CHEBI:145419"/>
    </reaction>
    <physiologicalReaction direction="left-to-right" evidence="4">
        <dbReference type="Rhea" id="RHEA:62077"/>
    </physiologicalReaction>
</comment>
<comment type="catalytic activity">
    <reaction evidence="4">
        <text>D-glucosamine 6-phosphate + NADP(+) = 2-amino-2-deoxy-6-phospho-D-glucono-1,5-lactone + NADPH + 2 H(+)</text>
        <dbReference type="Rhea" id="RHEA:62088"/>
        <dbReference type="ChEBI" id="CHEBI:15378"/>
        <dbReference type="ChEBI" id="CHEBI:57783"/>
        <dbReference type="ChEBI" id="CHEBI:58349"/>
        <dbReference type="ChEBI" id="CHEBI:58725"/>
        <dbReference type="ChEBI" id="CHEBI:145423"/>
    </reaction>
    <physiologicalReaction direction="left-to-right" evidence="4">
        <dbReference type="Rhea" id="RHEA:62089"/>
    </physiologicalReaction>
</comment>
<comment type="catalytic activity">
    <reaction evidence="4">
        <text>D-glucose + NAD(+) = D-glucono-1,5-lactone + NADH + H(+)</text>
        <dbReference type="Rhea" id="RHEA:14293"/>
        <dbReference type="ChEBI" id="CHEBI:4167"/>
        <dbReference type="ChEBI" id="CHEBI:15378"/>
        <dbReference type="ChEBI" id="CHEBI:16217"/>
        <dbReference type="ChEBI" id="CHEBI:57540"/>
        <dbReference type="ChEBI" id="CHEBI:57945"/>
        <dbReference type="EC" id="1.1.1.47"/>
    </reaction>
    <physiologicalReaction direction="left-to-right" evidence="4">
        <dbReference type="Rhea" id="RHEA:14294"/>
    </physiologicalReaction>
</comment>
<comment type="catalytic activity">
    <reaction evidence="4">
        <text>D-glucose + NADP(+) = D-glucono-1,5-lactone + NADPH + H(+)</text>
        <dbReference type="Rhea" id="RHEA:14405"/>
        <dbReference type="ChEBI" id="CHEBI:4167"/>
        <dbReference type="ChEBI" id="CHEBI:15378"/>
        <dbReference type="ChEBI" id="CHEBI:16217"/>
        <dbReference type="ChEBI" id="CHEBI:57783"/>
        <dbReference type="ChEBI" id="CHEBI:58349"/>
        <dbReference type="EC" id="1.1.1.47"/>
    </reaction>
    <physiologicalReaction direction="left-to-right" evidence="4">
        <dbReference type="Rhea" id="RHEA:14406"/>
    </physiologicalReaction>
</comment>
<comment type="catalytic activity">
    <reaction evidence="4">
        <text>D-glucose 6-sulfate + NADP(+) = 6-sulfo-D-glucono-1,5-lactone + NADPH + H(+)</text>
        <dbReference type="Rhea" id="RHEA:62080"/>
        <dbReference type="ChEBI" id="CHEBI:15378"/>
        <dbReference type="ChEBI" id="CHEBI:57783"/>
        <dbReference type="ChEBI" id="CHEBI:58349"/>
        <dbReference type="ChEBI" id="CHEBI:145424"/>
        <dbReference type="ChEBI" id="CHEBI:145427"/>
    </reaction>
    <physiologicalReaction direction="left-to-right" evidence="4">
        <dbReference type="Rhea" id="RHEA:62081"/>
    </physiologicalReaction>
</comment>
<comment type="pathway">
    <text evidence="7 10 12">Carbohydrate degradation; pentose phosphate pathway; D-ribulose 5-phosphate from D-glucose 6-phosphate (oxidative stage): step 1/3.</text>
</comment>
<comment type="pathway">
    <text evidence="4">Carbohydrate degradation; pentose phosphate pathway; D-ribulose 5-phosphate from D-glucose 6-phosphate (oxidative stage): step 2/3.</text>
</comment>
<comment type="pathway">
    <text evidence="4">Carbohydrate degradation; pentose phosphate pathway; D-ribulose 5-phosphate from D-glucose 6-phosphate (oxidative stage).</text>
</comment>
<comment type="subunit">
    <text evidence="4">Homodimer.</text>
</comment>
<comment type="subcellular location">
    <subcellularLocation>
        <location evidence="16">Endoplasmic reticulum lumen</location>
    </subcellularLocation>
</comment>
<comment type="alternative products">
    <event type="alternative splicing"/>
    <isoform>
        <id>O95479-1</id>
        <name>1</name>
        <sequence type="displayed"/>
    </isoform>
    <isoform>
        <id>O95479-2</id>
        <name>2</name>
        <sequence type="described" ref="VSP_060485"/>
    </isoform>
</comment>
<comment type="tissue specificity">
    <text evidence="6">Present in most tissues examined, strongest in liver.</text>
</comment>
<comment type="disease" evidence="7 9 10 12">
    <disease id="DI-01436">
        <name>Cortisone reductase deficiency 1</name>
        <acronym>CORTRD1</acronym>
        <description>An autosomal recessive error of cortisone metabolism characterized by a failure to regenerate cortisol from cortisone, resulting in increased cortisol clearance, activation of the hypothalamic-pituitary axis and ACTH-mediated adrenal androgen excess. Clinical features include hyperandrogenism resulting in hirsutism, oligo-amenorrhea, and infertility in females and premature pseudopuberty in males.</description>
        <dbReference type="MIM" id="604931"/>
    </disease>
    <text>The disease is caused by variants affecting the gene represented in this entry.</text>
</comment>
<comment type="similarity">
    <text evidence="14">In the N-terminal section; belongs to the glucose-6-phosphate dehydrogenase family.</text>
</comment>
<comment type="similarity">
    <text evidence="14">In the C-terminal section; belongs to the glucosamine/galactosamine-6-phosphate isomerase family. 6-phosphogluconolactonase subfamily.</text>
</comment>
<sequence>MWNMLIVAMCLALLGCLQAQELQGHVSIILLGATGDLAKKYLWQGLFQLYLDEAGRGHSFSFHGAALTAPKQGQELMAKALESLSCPKDMAPSHCAEHKDQFLQLSQYRQLKTAEDYQALNKDIEAQLQHAGLREAGRIFYFSVPPFAYEDIARNINSSCRPGPGAWLRVVLEKPFGHDHFSAQQLATELGTFFQEEEMYRVDHYLGKQAVAQILPFRDQNRKALDGLWNRHHVERVEIIMKETVDAEGRTSFYEEYGVIRDVLQNHLTEVLTLVAMELPHNVSSAEAVLRHKLQVFQALRGLQRGSAVVGQYQSYSEQVRRELQKPDSFHSLTPTFAAVLVHIDNLRWEGVPFILMSGKALDERVGYARILFKNQACCVQSEKHWAAAQSQCLPRQLVFHIGHGDLGSPAVLVSRNLFRPSLPSSWKEMEGPPGLRLFGSPLSDYYAYSPVRERDAHSVLLSHIFHGRKNFFITTENLLASWNFWTPLLESLAHKAPRLYPGGAENGRLLDFEFSSGRLFFSQQQPEQLVPGPGPAPMPSDFQVLRAKYRESPLVSAWSEELISKLANDIEATAVRAVRRFGQFHLALSGGSSPVALFQQLATAHYGFPWAHTHLWLVDERCVPLSDPESNFQGLQAHLLQHVRIPYYNIHPMPVHLQQRLCAEEDQGAQIYAREISALVANSSFDLVLLGMGADGHTASLFPQSPTGLDGEQLVVLTTSPSQPHRRMSLSLPLINRAKKVAVLVMGRMKREITTLVSRVGHEPKKWPISGVLPHSGQLVWYMDYDAFLG</sequence>
<accession>O95479</accession>
<accession>Q4TT33</accession>
<accession>Q66I35</accession>
<accession>Q68DT3</accession>
<accession>R4GMU1</accession>
<reference key="1">
    <citation type="journal article" date="1999" name="Blood Cells Mol. Dis.">
        <title>Human hexose-6-phosphate dehydrogenase (glucose 1-dehydrogenase) encoded at 1p36: coding sequence and expression.</title>
        <authorList>
            <person name="Mason P.J."/>
            <person name="Stevens D."/>
            <person name="Diez A."/>
            <person name="Knight S.W."/>
            <person name="Scopes D.A."/>
            <person name="Vulliamy T.J."/>
        </authorList>
    </citation>
    <scope>NUCLEOTIDE SEQUENCE [MRNA]</scope>
    <scope>TISSUE SPECIFICITY</scope>
    <source>
        <tissue>Bone marrow</tissue>
    </source>
</reference>
<reference key="2">
    <citation type="journal article" date="2007" name="BMC Genomics">
        <title>The full-ORF clone resource of the German cDNA consortium.</title>
        <authorList>
            <person name="Bechtel S."/>
            <person name="Rosenfelder H."/>
            <person name="Duda A."/>
            <person name="Schmidt C.P."/>
            <person name="Ernst U."/>
            <person name="Wellenreuther R."/>
            <person name="Mehrle A."/>
            <person name="Schuster C."/>
            <person name="Bahr A."/>
            <person name="Bloecker H."/>
            <person name="Heubner D."/>
            <person name="Hoerlein A."/>
            <person name="Michel G."/>
            <person name="Wedler H."/>
            <person name="Koehrer K."/>
            <person name="Ottenwaelder B."/>
            <person name="Poustka A."/>
            <person name="Wiemann S."/>
            <person name="Schupp I."/>
        </authorList>
    </citation>
    <scope>NUCLEOTIDE SEQUENCE [LARGE SCALE MRNA] (ISOFORM 2)</scope>
    <scope>VARIANT CORTRD1 GLN-453</scope>
    <scope>VARIANT ALA-151</scope>
    <source>
        <tissue>Salivary gland</tissue>
    </source>
</reference>
<reference key="3">
    <citation type="journal article" date="2006" name="Nature">
        <title>The DNA sequence and biological annotation of human chromosome 1.</title>
        <authorList>
            <person name="Gregory S.G."/>
            <person name="Barlow K.F."/>
            <person name="McLay K.E."/>
            <person name="Kaul R."/>
            <person name="Swarbreck D."/>
            <person name="Dunham A."/>
            <person name="Scott C.E."/>
            <person name="Howe K.L."/>
            <person name="Woodfine K."/>
            <person name="Spencer C.C.A."/>
            <person name="Jones M.C."/>
            <person name="Gillson C."/>
            <person name="Searle S."/>
            <person name="Zhou Y."/>
            <person name="Kokocinski F."/>
            <person name="McDonald L."/>
            <person name="Evans R."/>
            <person name="Phillips K."/>
            <person name="Atkinson A."/>
            <person name="Cooper R."/>
            <person name="Jones C."/>
            <person name="Hall R.E."/>
            <person name="Andrews T.D."/>
            <person name="Lloyd C."/>
            <person name="Ainscough R."/>
            <person name="Almeida J.P."/>
            <person name="Ambrose K.D."/>
            <person name="Anderson F."/>
            <person name="Andrew R.W."/>
            <person name="Ashwell R.I.S."/>
            <person name="Aubin K."/>
            <person name="Babbage A.K."/>
            <person name="Bagguley C.L."/>
            <person name="Bailey J."/>
            <person name="Beasley H."/>
            <person name="Bethel G."/>
            <person name="Bird C.P."/>
            <person name="Bray-Allen S."/>
            <person name="Brown J.Y."/>
            <person name="Brown A.J."/>
            <person name="Buckley D."/>
            <person name="Burton J."/>
            <person name="Bye J."/>
            <person name="Carder C."/>
            <person name="Chapman J.C."/>
            <person name="Clark S.Y."/>
            <person name="Clarke G."/>
            <person name="Clee C."/>
            <person name="Cobley V."/>
            <person name="Collier R.E."/>
            <person name="Corby N."/>
            <person name="Coville G.J."/>
            <person name="Davies J."/>
            <person name="Deadman R."/>
            <person name="Dunn M."/>
            <person name="Earthrowl M."/>
            <person name="Ellington A.G."/>
            <person name="Errington H."/>
            <person name="Frankish A."/>
            <person name="Frankland J."/>
            <person name="French L."/>
            <person name="Garner P."/>
            <person name="Garnett J."/>
            <person name="Gay L."/>
            <person name="Ghori M.R.J."/>
            <person name="Gibson R."/>
            <person name="Gilby L.M."/>
            <person name="Gillett W."/>
            <person name="Glithero R.J."/>
            <person name="Grafham D.V."/>
            <person name="Griffiths C."/>
            <person name="Griffiths-Jones S."/>
            <person name="Grocock R."/>
            <person name="Hammond S."/>
            <person name="Harrison E.S.I."/>
            <person name="Hart E."/>
            <person name="Haugen E."/>
            <person name="Heath P.D."/>
            <person name="Holmes S."/>
            <person name="Holt K."/>
            <person name="Howden P.J."/>
            <person name="Hunt A.R."/>
            <person name="Hunt S.E."/>
            <person name="Hunter G."/>
            <person name="Isherwood J."/>
            <person name="James R."/>
            <person name="Johnson C."/>
            <person name="Johnson D."/>
            <person name="Joy A."/>
            <person name="Kay M."/>
            <person name="Kershaw J.K."/>
            <person name="Kibukawa M."/>
            <person name="Kimberley A.M."/>
            <person name="King A."/>
            <person name="Knights A.J."/>
            <person name="Lad H."/>
            <person name="Laird G."/>
            <person name="Lawlor S."/>
            <person name="Leongamornlert D.A."/>
            <person name="Lloyd D.M."/>
            <person name="Loveland J."/>
            <person name="Lovell J."/>
            <person name="Lush M.J."/>
            <person name="Lyne R."/>
            <person name="Martin S."/>
            <person name="Mashreghi-Mohammadi M."/>
            <person name="Matthews L."/>
            <person name="Matthews N.S.W."/>
            <person name="McLaren S."/>
            <person name="Milne S."/>
            <person name="Mistry S."/>
            <person name="Moore M.J.F."/>
            <person name="Nickerson T."/>
            <person name="O'Dell C.N."/>
            <person name="Oliver K."/>
            <person name="Palmeiri A."/>
            <person name="Palmer S.A."/>
            <person name="Parker A."/>
            <person name="Patel D."/>
            <person name="Pearce A.V."/>
            <person name="Peck A.I."/>
            <person name="Pelan S."/>
            <person name="Phelps K."/>
            <person name="Phillimore B.J."/>
            <person name="Plumb R."/>
            <person name="Rajan J."/>
            <person name="Raymond C."/>
            <person name="Rouse G."/>
            <person name="Saenphimmachak C."/>
            <person name="Sehra H.K."/>
            <person name="Sheridan E."/>
            <person name="Shownkeen R."/>
            <person name="Sims S."/>
            <person name="Skuce C.D."/>
            <person name="Smith M."/>
            <person name="Steward C."/>
            <person name="Subramanian S."/>
            <person name="Sycamore N."/>
            <person name="Tracey A."/>
            <person name="Tromans A."/>
            <person name="Van Helmond Z."/>
            <person name="Wall M."/>
            <person name="Wallis J.M."/>
            <person name="White S."/>
            <person name="Whitehead S.L."/>
            <person name="Wilkinson J.E."/>
            <person name="Willey D.L."/>
            <person name="Williams H."/>
            <person name="Wilming L."/>
            <person name="Wray P.W."/>
            <person name="Wu Z."/>
            <person name="Coulson A."/>
            <person name="Vaudin M."/>
            <person name="Sulston J.E."/>
            <person name="Durbin R.M."/>
            <person name="Hubbard T."/>
            <person name="Wooster R."/>
            <person name="Dunham I."/>
            <person name="Carter N.P."/>
            <person name="McVean G."/>
            <person name="Ross M.T."/>
            <person name="Harrow J."/>
            <person name="Olson M.V."/>
            <person name="Beck S."/>
            <person name="Rogers J."/>
            <person name="Bentley D.R."/>
        </authorList>
    </citation>
    <scope>NUCLEOTIDE SEQUENCE [LARGE SCALE GENOMIC DNA]</scope>
</reference>
<reference key="4">
    <citation type="journal article" date="2004" name="Genome Res.">
        <title>The status, quality, and expansion of the NIH full-length cDNA project: the Mammalian Gene Collection (MGC).</title>
        <authorList>
            <consortium name="The MGC Project Team"/>
        </authorList>
    </citation>
    <scope>NUCLEOTIDE SEQUENCE [LARGE SCALE MRNA]</scope>
    <scope>VARIANT GLN-453</scope>
    <source>
        <tissue>Testis</tissue>
    </source>
</reference>
<reference key="5">
    <citation type="journal article" date="2009" name="J. Proteome Res.">
        <title>Glycoproteomics analysis of human liver tissue by combination of multiple enzyme digestion and hydrazide chemistry.</title>
        <authorList>
            <person name="Chen R."/>
            <person name="Jiang X."/>
            <person name="Sun D."/>
            <person name="Han G."/>
            <person name="Wang F."/>
            <person name="Ye M."/>
            <person name="Wang L."/>
            <person name="Zou H."/>
        </authorList>
    </citation>
    <scope>GLYCOSYLATION [LARGE SCALE ANALYSIS] AT ASN-157 AND ASN-282</scope>
    <source>
        <tissue>Liver</tissue>
    </source>
</reference>
<reference key="6">
    <citation type="journal article" date="2014" name="J. Proteomics">
        <title>An enzyme assisted RP-RPLC approach for in-depth analysis of human liver phosphoproteome.</title>
        <authorList>
            <person name="Bian Y."/>
            <person name="Song C."/>
            <person name="Cheng K."/>
            <person name="Dong M."/>
            <person name="Wang F."/>
            <person name="Huang J."/>
            <person name="Sun D."/>
            <person name="Wang L."/>
            <person name="Ye M."/>
            <person name="Zou H."/>
        </authorList>
    </citation>
    <scope>IDENTIFICATION BY MASS SPECTROMETRY [LARGE SCALE ANALYSIS]</scope>
    <source>
        <tissue>Liver</tissue>
    </source>
</reference>
<reference key="7">
    <citation type="journal article" date="2015" name="Proteomics">
        <title>N-terminome analysis of the human mitochondrial proteome.</title>
        <authorList>
            <person name="Vaca Jacome A.S."/>
            <person name="Rabilloud T."/>
            <person name="Schaeffer-Reiss C."/>
            <person name="Rompais M."/>
            <person name="Ayoub D."/>
            <person name="Lane L."/>
            <person name="Bairoch A."/>
            <person name="Van Dorsselaer A."/>
            <person name="Carapito C."/>
        </authorList>
    </citation>
    <scope>IDENTIFICATION BY MASS SPECTROMETRY [LARGE SCALE ANALYSIS]</scope>
</reference>
<reference key="8">
    <citation type="journal article" date="2003" name="Nat. Genet.">
        <title>Mutations in the genes encoding 11beta-hydroxysteroid dehydrogenase type 1 and hexose-6-phosphate dehydrogenase interact to cause cortisone reductase deficiency.</title>
        <authorList>
            <person name="Draper N."/>
            <person name="Walker E.A."/>
            <person name="Bujalska I.J."/>
            <person name="Tomlinson J.W."/>
            <person name="Chalder S.M."/>
            <person name="Arlt W."/>
            <person name="Lavery G.G."/>
            <person name="Bedendo O."/>
            <person name="Ray D.W."/>
            <person name="Laing I."/>
            <person name="Malunowicz E."/>
            <person name="White P.C."/>
            <person name="Hewison M."/>
            <person name="Mason P.J."/>
            <person name="Connell J.M."/>
            <person name="Shackleton C.H.L."/>
            <person name="Stewart P.M."/>
        </authorList>
    </citation>
    <scope>VARIANT CORTRD1 GLN-453</scope>
    <scope>CHARACTERIZATION OF VARIANT CORTRD1 GLN-453</scope>
    <scope>FUNCTION</scope>
    <scope>CATALYTIC ACTIVITY</scope>
    <scope>PATHWAY</scope>
</reference>
<reference key="9">
    <citation type="journal article" date="2008" name="J. Clin. Endocrinol. Metab.">
        <title>Steroid biomarkers and genetic studies reveal inactivating mutations in hexose-6-phosphate dehydrogenase in patients with cortisone reductase deficiency.</title>
        <authorList>
            <person name="Lavery G.G."/>
            <person name="Walker E.A."/>
            <person name="Tiganescu A."/>
            <person name="Ride J.P."/>
            <person name="Shackleton C.H."/>
            <person name="Tomlinson J.W."/>
            <person name="Connell J.M."/>
            <person name="Ray D.W."/>
            <person name="Biason-Lauber A."/>
            <person name="Malunowicz E.M."/>
            <person name="Arlt W."/>
            <person name="Stewart P.M."/>
        </authorList>
    </citation>
    <scope>VARIANTS CORTRD1 316-TYR--GLY-791 DEL AND ASP-359</scope>
    <scope>CHARACTERIZATION OF VARIANTS CORTRD1 316-TYR--GLY-791 DEL; ASP-359 AND GLN-453</scope>
    <scope>FUNCTION</scope>
    <scope>CATALYTIC ACTIVITY</scope>
    <scope>PATHWAY</scope>
    <scope>SUBCELLULAR LOCATION</scope>
</reference>
<reference key="10">
    <citation type="journal article" date="2013" name="Eur. J. Endocrinol.">
        <title>Novel H6PDH mutations in two girls with premature adrenarche: 'apparent' and 'true' CRD can be differentiated by urinary steroid profiling.</title>
        <authorList>
            <person name="Lavery G.G."/>
            <person name="Idkowiak J."/>
            <person name="Sherlock M."/>
            <person name="Bujalska I."/>
            <person name="Ride J.P."/>
            <person name="Saqib K."/>
            <person name="Hartmann M.F."/>
            <person name="Hughes B."/>
            <person name="Wudy S.A."/>
            <person name="De Schepper J."/>
            <person name="Arlt W."/>
            <person name="Krone N."/>
            <person name="Shackleton C.H."/>
            <person name="Walker E.A."/>
            <person name="Stewart P.M."/>
        </authorList>
    </citation>
    <scope>VARIANTS CORTRD1 LEU-146; 325-GLN--GLY-791 DEL AND 446-TYR--GLY-791 DEL</scope>
    <scope>CHARACTERIZATION OF VARIANTS CORTRD1 LEU-146; 325-GLN--GLY-791 DEL AND 446-TYR--GLY-791 DEL</scope>
    <scope>FUNCTION</scope>
    <scope>CATALYTIC ACTIVITY</scope>
    <scope>PATHWAY</scope>
</reference>
<name>G6PE_HUMAN</name>